<dbReference type="EC" id="2.7.7.6" evidence="1"/>
<dbReference type="EMBL" id="CP001011">
    <property type="protein sequence ID" value="ACB93503.1"/>
    <property type="molecule type" value="Genomic_DNA"/>
</dbReference>
<dbReference type="RefSeq" id="WP_011098326.1">
    <property type="nucleotide sequence ID" value="NC_010577.1"/>
</dbReference>
<dbReference type="SMR" id="B2IA67"/>
<dbReference type="KEGG" id="xfn:XfasM23_2105"/>
<dbReference type="HOGENOM" id="CLU_000524_3_1_6"/>
<dbReference type="Proteomes" id="UP000001698">
    <property type="component" value="Chromosome"/>
</dbReference>
<dbReference type="GO" id="GO:0000428">
    <property type="term" value="C:DNA-directed RNA polymerase complex"/>
    <property type="evidence" value="ECO:0007669"/>
    <property type="project" value="UniProtKB-KW"/>
</dbReference>
<dbReference type="GO" id="GO:0003677">
    <property type="term" value="F:DNA binding"/>
    <property type="evidence" value="ECO:0007669"/>
    <property type="project" value="UniProtKB-UniRule"/>
</dbReference>
<dbReference type="GO" id="GO:0003899">
    <property type="term" value="F:DNA-directed RNA polymerase activity"/>
    <property type="evidence" value="ECO:0007669"/>
    <property type="project" value="UniProtKB-UniRule"/>
</dbReference>
<dbReference type="GO" id="GO:0000287">
    <property type="term" value="F:magnesium ion binding"/>
    <property type="evidence" value="ECO:0007669"/>
    <property type="project" value="UniProtKB-UniRule"/>
</dbReference>
<dbReference type="GO" id="GO:0008270">
    <property type="term" value="F:zinc ion binding"/>
    <property type="evidence" value="ECO:0007669"/>
    <property type="project" value="UniProtKB-UniRule"/>
</dbReference>
<dbReference type="GO" id="GO:0006351">
    <property type="term" value="P:DNA-templated transcription"/>
    <property type="evidence" value="ECO:0007669"/>
    <property type="project" value="UniProtKB-UniRule"/>
</dbReference>
<dbReference type="CDD" id="cd02655">
    <property type="entry name" value="RNAP_beta'_C"/>
    <property type="match status" value="1"/>
</dbReference>
<dbReference type="CDD" id="cd01609">
    <property type="entry name" value="RNAP_beta'_N"/>
    <property type="match status" value="1"/>
</dbReference>
<dbReference type="FunFam" id="1.10.132.30:FF:000003">
    <property type="entry name" value="DNA-directed RNA polymerase subunit beta"/>
    <property type="match status" value="1"/>
</dbReference>
<dbReference type="FunFam" id="1.10.150.390:FF:000002">
    <property type="entry name" value="DNA-directed RNA polymerase subunit beta"/>
    <property type="match status" value="1"/>
</dbReference>
<dbReference type="Gene3D" id="1.10.132.30">
    <property type="match status" value="1"/>
</dbReference>
<dbReference type="Gene3D" id="1.10.150.390">
    <property type="match status" value="1"/>
</dbReference>
<dbReference type="Gene3D" id="1.10.1790.20">
    <property type="match status" value="1"/>
</dbReference>
<dbReference type="Gene3D" id="1.10.40.90">
    <property type="match status" value="1"/>
</dbReference>
<dbReference type="Gene3D" id="2.40.40.20">
    <property type="match status" value="1"/>
</dbReference>
<dbReference type="Gene3D" id="2.40.50.100">
    <property type="match status" value="3"/>
</dbReference>
<dbReference type="Gene3D" id="4.10.860.120">
    <property type="entry name" value="RNA polymerase II, clamp domain"/>
    <property type="match status" value="1"/>
</dbReference>
<dbReference type="Gene3D" id="1.10.274.100">
    <property type="entry name" value="RNA polymerase Rpb1, domain 3"/>
    <property type="match status" value="1"/>
</dbReference>
<dbReference type="HAMAP" id="MF_01322">
    <property type="entry name" value="RNApol_bact_RpoC"/>
    <property type="match status" value="1"/>
</dbReference>
<dbReference type="InterPro" id="IPR045867">
    <property type="entry name" value="DNA-dir_RpoC_beta_prime"/>
</dbReference>
<dbReference type="InterPro" id="IPR012754">
    <property type="entry name" value="DNA-dir_RpoC_beta_prime_bact"/>
</dbReference>
<dbReference type="InterPro" id="IPR000722">
    <property type="entry name" value="RNA_pol_asu"/>
</dbReference>
<dbReference type="InterPro" id="IPR006592">
    <property type="entry name" value="RNA_pol_N"/>
</dbReference>
<dbReference type="InterPro" id="IPR007080">
    <property type="entry name" value="RNA_pol_Rpb1_1"/>
</dbReference>
<dbReference type="InterPro" id="IPR007066">
    <property type="entry name" value="RNA_pol_Rpb1_3"/>
</dbReference>
<dbReference type="InterPro" id="IPR042102">
    <property type="entry name" value="RNA_pol_Rpb1_3_sf"/>
</dbReference>
<dbReference type="InterPro" id="IPR007083">
    <property type="entry name" value="RNA_pol_Rpb1_4"/>
</dbReference>
<dbReference type="InterPro" id="IPR007081">
    <property type="entry name" value="RNA_pol_Rpb1_5"/>
</dbReference>
<dbReference type="InterPro" id="IPR044893">
    <property type="entry name" value="RNA_pol_Rpb1_clamp_domain"/>
</dbReference>
<dbReference type="InterPro" id="IPR038120">
    <property type="entry name" value="Rpb1_funnel_sf"/>
</dbReference>
<dbReference type="NCBIfam" id="TIGR02386">
    <property type="entry name" value="rpoC_TIGR"/>
    <property type="match status" value="1"/>
</dbReference>
<dbReference type="PANTHER" id="PTHR19376">
    <property type="entry name" value="DNA-DIRECTED RNA POLYMERASE"/>
    <property type="match status" value="1"/>
</dbReference>
<dbReference type="PANTHER" id="PTHR19376:SF54">
    <property type="entry name" value="DNA-DIRECTED RNA POLYMERASE SUBUNIT BETA"/>
    <property type="match status" value="1"/>
</dbReference>
<dbReference type="Pfam" id="PF04997">
    <property type="entry name" value="RNA_pol_Rpb1_1"/>
    <property type="match status" value="1"/>
</dbReference>
<dbReference type="Pfam" id="PF00623">
    <property type="entry name" value="RNA_pol_Rpb1_2"/>
    <property type="match status" value="2"/>
</dbReference>
<dbReference type="Pfam" id="PF04983">
    <property type="entry name" value="RNA_pol_Rpb1_3"/>
    <property type="match status" value="1"/>
</dbReference>
<dbReference type="Pfam" id="PF05000">
    <property type="entry name" value="RNA_pol_Rpb1_4"/>
    <property type="match status" value="1"/>
</dbReference>
<dbReference type="Pfam" id="PF04998">
    <property type="entry name" value="RNA_pol_Rpb1_5"/>
    <property type="match status" value="1"/>
</dbReference>
<dbReference type="SMART" id="SM00663">
    <property type="entry name" value="RPOLA_N"/>
    <property type="match status" value="1"/>
</dbReference>
<dbReference type="SUPFAM" id="SSF64484">
    <property type="entry name" value="beta and beta-prime subunits of DNA dependent RNA-polymerase"/>
    <property type="match status" value="1"/>
</dbReference>
<evidence type="ECO:0000255" key="1">
    <source>
        <dbReference type="HAMAP-Rule" id="MF_01322"/>
    </source>
</evidence>
<evidence type="ECO:0000256" key="2">
    <source>
        <dbReference type="SAM" id="MobiDB-lite"/>
    </source>
</evidence>
<name>RPOC_XYLF2</name>
<proteinExistence type="inferred from homology"/>
<keyword id="KW-0240">DNA-directed RNA polymerase</keyword>
<keyword id="KW-0460">Magnesium</keyword>
<keyword id="KW-0479">Metal-binding</keyword>
<keyword id="KW-0548">Nucleotidyltransferase</keyword>
<keyword id="KW-0804">Transcription</keyword>
<keyword id="KW-0808">Transferase</keyword>
<keyword id="KW-0862">Zinc</keyword>
<organism>
    <name type="scientific">Xylella fastidiosa (strain M23)</name>
    <dbReference type="NCBI Taxonomy" id="405441"/>
    <lineage>
        <taxon>Bacteria</taxon>
        <taxon>Pseudomonadati</taxon>
        <taxon>Pseudomonadota</taxon>
        <taxon>Gammaproteobacteria</taxon>
        <taxon>Lysobacterales</taxon>
        <taxon>Lysobacteraceae</taxon>
        <taxon>Xylella</taxon>
    </lineage>
</organism>
<sequence length="1407" mass="155883">MKDLLNLFNQQRQTLDFDAIKIGLASPALIRSWSFGEVKKPETINYRTFKPERDGLFCAAIFGPIKDYECLCGKYKRMKHRGVVCEKCGTEVTLAKVRRERMGCIELASPVAHIWFLKSLPSRIGLMLDMTLRDIERVLYFEAYVVTEPGLTPLERRQLLTEEQYLQARQEHADDFDASMGAEAVYELLRMIDLQSEMARLREEIVVTGSETKLKRLTKRIKLIEAFIESGNRPEWMILTVLPVLPPDLRPLVPLDGGRFATSDLNDLYRRVINRNNRLCRLLELSAPDIIVRNEKRMLQESVDALLDNGRRGRAITGTNKRPLKSLADMIKGKQGRFRQNLLGKRVDYSARSVIIVGPNLRLHQCGLPKKMALELFKPFVFAKLQRRGLATTIKGAKKLVEREEAEVWDILEEVISEHPVVLNRAPTLHRQGIQAFEPVLIEGKAIQLHPLVCTAFNADFDGDQMAVHVPLSLEAQLEARALMMSTNNILSPANGEPIIVPSQDVVLGLYYMSRALENKKGEGMVFANTSELKRAYDNSVVELHAKVKVRITEIETDDQGLRNKASSIVDTTVGRALLSEILPEGLPFVLVNTEMTKKNISRLINSSYRMLGLKETVVFADKLMYTGYAYATRAGVSICIDDMLIPIEKKEILGEAEQEVLEIQEQYQSGLVTAGERYNKVVDIWSRTNERIAKAMMDTIGTERVVNADGEIVDQKSMNSLYIMADSGARGSPQQIRQLAAMRGLMVRPDGSIIETPIKANFREGLSVQEYFNSTHGARKGLADTALKTANSGYLTRRLVDVTQDLCVVQLDCGTAGGLTMTPIVEGGDVVEPLKDRVLGRVVAEDVLLPGNDDEPIVTRSTLLDEQWVAKLEEAGVQSVKVRSPITCESPFGVCALCYGRDLARGHLVNMGEAVGVIAAQSIGEPGTQLTMRTFHIGGTALSAAAIDNITVKTSGSVKFTNLKYVEHANGTLVAVSRSGEISVLDTHGRERERYKLPYGATINVKDMAEVKSGQILANWDPHNHPIVSEVAGFVRFIDFVDGVTVIEKTDDLTGLSSREIADLKRRGSQGKDLRPLVRIVDKKGNDLTIPGTDLSAQYLLPPRSIVNLQDGAPVGIGDVVAKIPQEASKTRDITGGLPRVADLFEARRPKDPAILAERSGVISFGKDTKGKQRLIIKDADGSEHEELIPKYRQIIVFEGEHVTKGETIVDGEPSPQDILRLLGIEPLAAYLVKEIQDVYRLQGVKINDKHIEVITRQMLRKVEIVDQGNSKFLNGEQVERQRVIDENAKLIARNELPAKYNPVLLGITKASLATESFISAASFQETTRVLTEAAVRGTRDNLRGLKENVIVGRLIPAGTGQTYHSQRRYSSVGLTESEMETLVGRSTSSGTEVTSPSKDAIPLGG</sequence>
<gene>
    <name evidence="1" type="primary">rpoC</name>
    <name type="ordered locus">XfasM23_2105</name>
</gene>
<comment type="function">
    <text evidence="1">DNA-dependent RNA polymerase catalyzes the transcription of DNA into RNA using the four ribonucleoside triphosphates as substrates.</text>
</comment>
<comment type="catalytic activity">
    <reaction evidence="1">
        <text>RNA(n) + a ribonucleoside 5'-triphosphate = RNA(n+1) + diphosphate</text>
        <dbReference type="Rhea" id="RHEA:21248"/>
        <dbReference type="Rhea" id="RHEA-COMP:14527"/>
        <dbReference type="Rhea" id="RHEA-COMP:17342"/>
        <dbReference type="ChEBI" id="CHEBI:33019"/>
        <dbReference type="ChEBI" id="CHEBI:61557"/>
        <dbReference type="ChEBI" id="CHEBI:140395"/>
        <dbReference type="EC" id="2.7.7.6"/>
    </reaction>
</comment>
<comment type="cofactor">
    <cofactor evidence="1">
        <name>Mg(2+)</name>
        <dbReference type="ChEBI" id="CHEBI:18420"/>
    </cofactor>
    <text evidence="1">Binds 1 Mg(2+) ion per subunit.</text>
</comment>
<comment type="cofactor">
    <cofactor evidence="1">
        <name>Zn(2+)</name>
        <dbReference type="ChEBI" id="CHEBI:29105"/>
    </cofactor>
    <text evidence="1">Binds 2 Zn(2+) ions per subunit.</text>
</comment>
<comment type="subunit">
    <text evidence="1">The RNAP catalytic core consists of 2 alpha, 1 beta, 1 beta' and 1 omega subunit. When a sigma factor is associated with the core the holoenzyme is formed, which can initiate transcription.</text>
</comment>
<comment type="similarity">
    <text evidence="1">Belongs to the RNA polymerase beta' chain family.</text>
</comment>
<feature type="chain" id="PRO_1000141801" description="DNA-directed RNA polymerase subunit beta'">
    <location>
        <begin position="1"/>
        <end position="1407"/>
    </location>
</feature>
<feature type="region of interest" description="Disordered" evidence="2">
    <location>
        <begin position="1384"/>
        <end position="1407"/>
    </location>
</feature>
<feature type="compositionally biased region" description="Polar residues" evidence="2">
    <location>
        <begin position="1386"/>
        <end position="1399"/>
    </location>
</feature>
<feature type="binding site" evidence="1">
    <location>
        <position position="70"/>
    </location>
    <ligand>
        <name>Zn(2+)</name>
        <dbReference type="ChEBI" id="CHEBI:29105"/>
        <label>1</label>
    </ligand>
</feature>
<feature type="binding site" evidence="1">
    <location>
        <position position="72"/>
    </location>
    <ligand>
        <name>Zn(2+)</name>
        <dbReference type="ChEBI" id="CHEBI:29105"/>
        <label>1</label>
    </ligand>
</feature>
<feature type="binding site" evidence="1">
    <location>
        <position position="85"/>
    </location>
    <ligand>
        <name>Zn(2+)</name>
        <dbReference type="ChEBI" id="CHEBI:29105"/>
        <label>1</label>
    </ligand>
</feature>
<feature type="binding site" evidence="1">
    <location>
        <position position="88"/>
    </location>
    <ligand>
        <name>Zn(2+)</name>
        <dbReference type="ChEBI" id="CHEBI:29105"/>
        <label>1</label>
    </ligand>
</feature>
<feature type="binding site" evidence="1">
    <location>
        <position position="460"/>
    </location>
    <ligand>
        <name>Mg(2+)</name>
        <dbReference type="ChEBI" id="CHEBI:18420"/>
    </ligand>
</feature>
<feature type="binding site" evidence="1">
    <location>
        <position position="462"/>
    </location>
    <ligand>
        <name>Mg(2+)</name>
        <dbReference type="ChEBI" id="CHEBI:18420"/>
    </ligand>
</feature>
<feature type="binding site" evidence="1">
    <location>
        <position position="464"/>
    </location>
    <ligand>
        <name>Mg(2+)</name>
        <dbReference type="ChEBI" id="CHEBI:18420"/>
    </ligand>
</feature>
<feature type="binding site" evidence="1">
    <location>
        <position position="814"/>
    </location>
    <ligand>
        <name>Zn(2+)</name>
        <dbReference type="ChEBI" id="CHEBI:29105"/>
        <label>2</label>
    </ligand>
</feature>
<feature type="binding site" evidence="1">
    <location>
        <position position="889"/>
    </location>
    <ligand>
        <name>Zn(2+)</name>
        <dbReference type="ChEBI" id="CHEBI:29105"/>
        <label>2</label>
    </ligand>
</feature>
<feature type="binding site" evidence="1">
    <location>
        <position position="896"/>
    </location>
    <ligand>
        <name>Zn(2+)</name>
        <dbReference type="ChEBI" id="CHEBI:29105"/>
        <label>2</label>
    </ligand>
</feature>
<feature type="binding site" evidence="1">
    <location>
        <position position="899"/>
    </location>
    <ligand>
        <name>Zn(2+)</name>
        <dbReference type="ChEBI" id="CHEBI:29105"/>
        <label>2</label>
    </ligand>
</feature>
<protein>
    <recommendedName>
        <fullName evidence="1">DNA-directed RNA polymerase subunit beta'</fullName>
        <shortName evidence="1">RNAP subunit beta'</shortName>
        <ecNumber evidence="1">2.7.7.6</ecNumber>
    </recommendedName>
    <alternativeName>
        <fullName evidence="1">RNA polymerase subunit beta'</fullName>
    </alternativeName>
    <alternativeName>
        <fullName evidence="1">Transcriptase subunit beta'</fullName>
    </alternativeName>
</protein>
<reference key="1">
    <citation type="journal article" date="2010" name="J. Bacteriol.">
        <title>Whole genome sequences of two Xylella fastidiosa strains (M12 and M23) causing almond leaf scorch disease in California.</title>
        <authorList>
            <person name="Chen J."/>
            <person name="Xie G."/>
            <person name="Han S."/>
            <person name="Chertkov O."/>
            <person name="Sims D."/>
            <person name="Civerolo E.L."/>
        </authorList>
    </citation>
    <scope>NUCLEOTIDE SEQUENCE [LARGE SCALE GENOMIC DNA]</scope>
    <source>
        <strain>M23</strain>
    </source>
</reference>
<accession>B2IA67</accession>